<gene>
    <name evidence="1" type="primary">rbm26</name>
</gene>
<name>RBM26_XENLA</name>
<feature type="chain" id="PRO_0000273378" description="RNA-binding protein 26">
    <location>
        <begin position="1"/>
        <end position="1059"/>
    </location>
</feature>
<feature type="domain" description="RRM 1" evidence="3">
    <location>
        <begin position="581"/>
        <end position="655"/>
    </location>
</feature>
<feature type="domain" description="RRM 2" evidence="3">
    <location>
        <begin position="942"/>
        <end position="1011"/>
    </location>
</feature>
<feature type="zinc finger region" description="C3H1-type" evidence="4">
    <location>
        <begin position="327"/>
        <end position="355"/>
    </location>
</feature>
<feature type="region of interest" description="Disordered" evidence="5">
    <location>
        <begin position="98"/>
        <end position="275"/>
    </location>
</feature>
<feature type="region of interest" description="Disordered" evidence="5">
    <location>
        <begin position="375"/>
        <end position="443"/>
    </location>
</feature>
<feature type="region of interest" description="Disordered" evidence="5">
    <location>
        <begin position="1010"/>
        <end position="1059"/>
    </location>
</feature>
<feature type="coiled-coil region" evidence="2">
    <location>
        <begin position="771"/>
        <end position="873"/>
    </location>
</feature>
<feature type="compositionally biased region" description="Basic and acidic residues" evidence="5">
    <location>
        <begin position="98"/>
        <end position="114"/>
    </location>
</feature>
<feature type="compositionally biased region" description="Basic and acidic residues" evidence="5">
    <location>
        <begin position="130"/>
        <end position="147"/>
    </location>
</feature>
<feature type="compositionally biased region" description="Polar residues" evidence="5">
    <location>
        <begin position="172"/>
        <end position="182"/>
    </location>
</feature>
<feature type="compositionally biased region" description="Basic and acidic residues" evidence="5">
    <location>
        <begin position="184"/>
        <end position="213"/>
    </location>
</feature>
<feature type="compositionally biased region" description="Basic residues" evidence="5">
    <location>
        <begin position="214"/>
        <end position="231"/>
    </location>
</feature>
<feature type="compositionally biased region" description="Basic and acidic residues" evidence="5">
    <location>
        <begin position="232"/>
        <end position="266"/>
    </location>
</feature>
<feature type="compositionally biased region" description="Pro residues" evidence="5">
    <location>
        <begin position="375"/>
        <end position="428"/>
    </location>
</feature>
<feature type="compositionally biased region" description="Low complexity" evidence="5">
    <location>
        <begin position="434"/>
        <end position="443"/>
    </location>
</feature>
<feature type="compositionally biased region" description="Acidic residues" evidence="5">
    <location>
        <begin position="1019"/>
        <end position="1031"/>
    </location>
</feature>
<feature type="compositionally biased region" description="Acidic residues" evidence="5">
    <location>
        <begin position="1040"/>
        <end position="1052"/>
    </location>
</feature>
<feature type="splice variant" id="VSP_022536" description="In isoform 2." evidence="6">
    <location>
        <begin position="466"/>
        <end position="467"/>
    </location>
</feature>
<feature type="sequence conflict" description="In Ref. 1; AAH43744." evidence="7" ref="1">
    <original>T</original>
    <variation>I</variation>
    <location>
        <position position="712"/>
    </location>
</feature>
<sequence length="1059" mass="118877">MIIEDFEALKHWLSKTLEPICDADPSALAKYVLALVKKDKSDRELNALCIDQLDVFLQKETQGFVDKLFDAINTKSYLPQPDSTSTAVVKLDSFEHQEKEIKKDEVNKEEEKEKKAPRRLNQSPQPSSTRHKDTRENRKRSNSDRESNSIQNSFRSGLPEQKQDVDAAPPRLNSNKVQNAKNTRSRDDRKRDDRFRKREYDRNVPRRDSYRDRYNRRRGRSRSYSRSRSRSWSKERQRDRDRSRSRTRSRDKDSGKPKFDLDRPDPVDNSYASGSSVPHIGSAHFPVPTLSSTITVITPSHHGNSSAENWPEFHEDQVDHSSYGRLQMQKKRCRDYDEKGFCMRGDMCPFDHGSDPVVVEDVNLPGILPFPAPPPVLEGPPPPGLPPPPSLLTPPPVNLQPPPVPPPGPLPPSLPPVTGPPPPLPPLQPAGMDAPPNSATSSVPTVVTTGILHPPPVPPSSLFPSAAAAAGPIPLFPETYEADGYNPEAPSMTTTSRPLYRHRVHAQRPNLIGLTSGDMDLPTPREKNNMRIVVDSESRKRNLGSGDCVLPSKKPWFDKSNFNNRMNPGFQKKPLFPNENTKLELRRIPPELNNISKLNEHFSKFGTIVNLQVAYKGDPEGALIQFATHGEAKKAISSTEAVLNNRFIRMYWHREGSSQQLQTPGLPKVVHLTVPQQPNLSVMKQSIKERLGPVPANNSEPSVAQNINTETTQNIAKVPVKERLGYMSKTVSAATEKVFSTSTGLTKTVYNPAALKAMQKSVLYPICNDNGDAQKKKQEALKLQQDVRKKKQEILEKRIETQKILISKLEKNKNMKSEDKAEILKTLETLTNSITKLRDELKAVSSTGNVVKNNKSKAQMQKELLDTELDLYNKIQAGDDVTELRKKYTELQLDAAKRGILSSGRGRGVHLRGRGVIRGRGRVLHGRGRGASVHAVVDHRPRALKISGFTEGDREYLLPHFAHFGEIEDCQIDDSSLHAIITFKTRAEAEAAAVHGAQFKGQDLKLAWNKPVPNASSTEVEDADQEEEEFHEDSIVDDSLLQDDDEEEEDDNESRSWRR</sequence>
<accession>Q2T9I5</accession>
<accession>Q7ZYK7</accession>
<organism>
    <name type="scientific">Xenopus laevis</name>
    <name type="common">African clawed frog</name>
    <dbReference type="NCBI Taxonomy" id="8355"/>
    <lineage>
        <taxon>Eukaryota</taxon>
        <taxon>Metazoa</taxon>
        <taxon>Chordata</taxon>
        <taxon>Craniata</taxon>
        <taxon>Vertebrata</taxon>
        <taxon>Euteleostomi</taxon>
        <taxon>Amphibia</taxon>
        <taxon>Batrachia</taxon>
        <taxon>Anura</taxon>
        <taxon>Pipoidea</taxon>
        <taxon>Pipidae</taxon>
        <taxon>Xenopodinae</taxon>
        <taxon>Xenopus</taxon>
        <taxon>Xenopus</taxon>
    </lineage>
</organism>
<proteinExistence type="evidence at transcript level"/>
<evidence type="ECO:0000250" key="1">
    <source>
        <dbReference type="UniProtKB" id="Q5T8P6"/>
    </source>
</evidence>
<evidence type="ECO:0000255" key="2"/>
<evidence type="ECO:0000255" key="3">
    <source>
        <dbReference type="PROSITE-ProRule" id="PRU00176"/>
    </source>
</evidence>
<evidence type="ECO:0000255" key="4">
    <source>
        <dbReference type="PROSITE-ProRule" id="PRU00723"/>
    </source>
</evidence>
<evidence type="ECO:0000256" key="5">
    <source>
        <dbReference type="SAM" id="MobiDB-lite"/>
    </source>
</evidence>
<evidence type="ECO:0000303" key="6">
    <source ref="1"/>
</evidence>
<evidence type="ECO:0000305" key="7"/>
<protein>
    <recommendedName>
        <fullName evidence="1">RNA-binding protein 26</fullName>
    </recommendedName>
    <alternativeName>
        <fullName>RNA-binding motif protein 26</fullName>
    </alternativeName>
</protein>
<comment type="function">
    <text evidence="1">May be involved in the turnover of nuclear polyadenylated (pA+) RNA.</text>
</comment>
<comment type="alternative products">
    <event type="alternative splicing"/>
    <isoform>
        <id>Q2T9I5-1</id>
        <name>1</name>
        <sequence type="displayed"/>
    </isoform>
    <isoform>
        <id>Q2T9I5-2</id>
        <name>2</name>
        <sequence type="described" ref="VSP_022536"/>
    </isoform>
</comment>
<keyword id="KW-0025">Alternative splicing</keyword>
<keyword id="KW-0175">Coiled coil</keyword>
<keyword id="KW-0479">Metal-binding</keyword>
<keyword id="KW-1185">Reference proteome</keyword>
<keyword id="KW-0677">Repeat</keyword>
<keyword id="KW-0694">RNA-binding</keyword>
<keyword id="KW-0862">Zinc</keyword>
<keyword id="KW-0863">Zinc-finger</keyword>
<reference key="1">
    <citation type="submission" date="2005-12" db="EMBL/GenBank/DDBJ databases">
        <authorList>
            <consortium name="NIH - Xenopus Gene Collection (XGC) project"/>
        </authorList>
    </citation>
    <scope>NUCLEOTIDE SEQUENCE [LARGE SCALE MRNA] (ISOFORMS 1 AND 2)</scope>
    <source>
        <tissue>Embryo</tissue>
        <tissue>Oocyte</tissue>
    </source>
</reference>
<dbReference type="EMBL" id="BC043744">
    <property type="protein sequence ID" value="AAH43744.1"/>
    <property type="molecule type" value="mRNA"/>
</dbReference>
<dbReference type="EMBL" id="BC111508">
    <property type="protein sequence ID" value="AAI11509.1"/>
    <property type="molecule type" value="mRNA"/>
</dbReference>
<dbReference type="RefSeq" id="NP_001079468.1">
    <property type="nucleotide sequence ID" value="NM_001085999.1"/>
</dbReference>
<dbReference type="SMR" id="Q2T9I5"/>
<dbReference type="DNASU" id="379155"/>
<dbReference type="GeneID" id="379155"/>
<dbReference type="KEGG" id="xla:379155"/>
<dbReference type="AGR" id="Xenbase:XB-GENE-960059"/>
<dbReference type="CTD" id="379155"/>
<dbReference type="Xenbase" id="XB-GENE-960059">
    <property type="gene designation" value="rbm26.S"/>
</dbReference>
<dbReference type="OrthoDB" id="443401at2759"/>
<dbReference type="Proteomes" id="UP000186698">
    <property type="component" value="Chromosome 2S"/>
</dbReference>
<dbReference type="Bgee" id="379155">
    <property type="expression patterns" value="Expressed in gastrula and 19 other cell types or tissues"/>
</dbReference>
<dbReference type="GO" id="GO:0005634">
    <property type="term" value="C:nucleus"/>
    <property type="evidence" value="ECO:0000318"/>
    <property type="project" value="GO_Central"/>
</dbReference>
<dbReference type="GO" id="GO:0003723">
    <property type="term" value="F:RNA binding"/>
    <property type="evidence" value="ECO:0000318"/>
    <property type="project" value="GO_Central"/>
</dbReference>
<dbReference type="GO" id="GO:0008270">
    <property type="term" value="F:zinc ion binding"/>
    <property type="evidence" value="ECO:0007669"/>
    <property type="project" value="UniProtKB-KW"/>
</dbReference>
<dbReference type="CDD" id="cd12516">
    <property type="entry name" value="RRM1_RBM26"/>
    <property type="match status" value="1"/>
</dbReference>
<dbReference type="CDD" id="cd12258">
    <property type="entry name" value="RRM2_RBM26_like"/>
    <property type="match status" value="1"/>
</dbReference>
<dbReference type="FunFam" id="3.30.70.330:FF:000331">
    <property type="entry name" value="RNA binding motif protein 26"/>
    <property type="match status" value="1"/>
</dbReference>
<dbReference type="FunFam" id="3.30.70.330:FF:000330">
    <property type="entry name" value="RNA-binding motif protein 26"/>
    <property type="match status" value="1"/>
</dbReference>
<dbReference type="FunFam" id="1.20.1390.10:FF:000001">
    <property type="entry name" value="RNA-binding protein 26 isoform X2"/>
    <property type="match status" value="1"/>
</dbReference>
<dbReference type="Gene3D" id="3.30.70.330">
    <property type="match status" value="2"/>
</dbReference>
<dbReference type="Gene3D" id="1.20.1390.10">
    <property type="entry name" value="PWI domain"/>
    <property type="match status" value="1"/>
</dbReference>
<dbReference type="InterPro" id="IPR012677">
    <property type="entry name" value="Nucleotide-bd_a/b_plait_sf"/>
</dbReference>
<dbReference type="InterPro" id="IPR002483">
    <property type="entry name" value="PWI_dom"/>
</dbReference>
<dbReference type="InterPro" id="IPR035979">
    <property type="entry name" value="RBD_domain_sf"/>
</dbReference>
<dbReference type="InterPro" id="IPR039511">
    <property type="entry name" value="RBM26-like_RRM2"/>
</dbReference>
<dbReference type="InterPro" id="IPR045137">
    <property type="entry name" value="RBM26/27"/>
</dbReference>
<dbReference type="InterPro" id="IPR034859">
    <property type="entry name" value="RBM26_RRM1"/>
</dbReference>
<dbReference type="InterPro" id="IPR000504">
    <property type="entry name" value="RRM_dom"/>
</dbReference>
<dbReference type="InterPro" id="IPR000571">
    <property type="entry name" value="Znf_CCCH"/>
</dbReference>
<dbReference type="InterPro" id="IPR036855">
    <property type="entry name" value="Znf_CCCH_sf"/>
</dbReference>
<dbReference type="PANTHER" id="PTHR14398">
    <property type="entry name" value="RNA RECOGNITION RRM/RNP DOMAIN"/>
    <property type="match status" value="1"/>
</dbReference>
<dbReference type="PANTHER" id="PTHR14398:SF2">
    <property type="entry name" value="RNA-BINDING PROTEIN 26"/>
    <property type="match status" value="1"/>
</dbReference>
<dbReference type="Pfam" id="PF14605">
    <property type="entry name" value="Nup35_RRM_2"/>
    <property type="match status" value="1"/>
</dbReference>
<dbReference type="Pfam" id="PF01480">
    <property type="entry name" value="PWI"/>
    <property type="match status" value="1"/>
</dbReference>
<dbReference type="Pfam" id="PF00076">
    <property type="entry name" value="RRM_1"/>
    <property type="match status" value="1"/>
</dbReference>
<dbReference type="SMART" id="SM00360">
    <property type="entry name" value="RRM"/>
    <property type="match status" value="2"/>
</dbReference>
<dbReference type="SMART" id="SM00356">
    <property type="entry name" value="ZnF_C3H1"/>
    <property type="match status" value="1"/>
</dbReference>
<dbReference type="SUPFAM" id="SSF90229">
    <property type="entry name" value="CCCH zinc finger"/>
    <property type="match status" value="1"/>
</dbReference>
<dbReference type="SUPFAM" id="SSF54928">
    <property type="entry name" value="RNA-binding domain, RBD"/>
    <property type="match status" value="2"/>
</dbReference>
<dbReference type="PROSITE" id="PS50102">
    <property type="entry name" value="RRM"/>
    <property type="match status" value="2"/>
</dbReference>
<dbReference type="PROSITE" id="PS50103">
    <property type="entry name" value="ZF_C3H1"/>
    <property type="match status" value="1"/>
</dbReference>